<accession>Q8STF1</accession>
<dbReference type="EMBL" id="AL590445">
    <property type="protein sequence ID" value="CAD26684.1"/>
    <property type="molecule type" value="Genomic_DNA"/>
</dbReference>
<dbReference type="EMBL" id="AL590450">
    <property type="protein sequence ID" value="CAD25919.1"/>
    <property type="molecule type" value="Genomic_DNA"/>
</dbReference>
<dbReference type="RefSeq" id="NP_586315.1">
    <property type="nucleotide sequence ID" value="NM_001042148.1"/>
</dbReference>
<dbReference type="RefSeq" id="NP_597507.1">
    <property type="nucleotide sequence ID" value="NM_001041373.1"/>
</dbReference>
<dbReference type="GeneID" id="859174"/>
<dbReference type="GeneID" id="859966"/>
<dbReference type="KEGG" id="ecu:ECU05_1640"/>
<dbReference type="KEGG" id="ecu:ECU11_0090"/>
<dbReference type="VEuPathDB" id="MicrosporidiaDB:ECU05_1640"/>
<dbReference type="VEuPathDB" id="MicrosporidiaDB:ECU11_0090"/>
<dbReference type="HOGENOM" id="CLU_059413_0_0_1"/>
<dbReference type="InParanoid" id="Q8STF1"/>
<dbReference type="Proteomes" id="UP000000819">
    <property type="component" value="Chromosome V"/>
</dbReference>
<dbReference type="Proteomes" id="UP000000819">
    <property type="component" value="Chromosome XI"/>
</dbReference>
<dbReference type="InterPro" id="IPR019081">
    <property type="entry name" value="UPF0328"/>
</dbReference>
<dbReference type="Pfam" id="PF09591">
    <property type="entry name" value="DUF2463"/>
    <property type="match status" value="1"/>
</dbReference>
<gene>
    <name type="ordered locus">ECU05_1640</name>
</gene>
<gene>
    <name type="ordered locus">ECU11_0090</name>
</gene>
<protein>
    <recommendedName>
        <fullName>UPF0328 protein ECU05_1640/ECU11_0090</fullName>
    </recommendedName>
</protein>
<reference key="1">
    <citation type="journal article" date="2001" name="Nature">
        <title>Genome sequence and gene compaction of the eukaryote parasite Encephalitozoon cuniculi.</title>
        <authorList>
            <person name="Katinka M.D."/>
            <person name="Duprat S."/>
            <person name="Cornillot E."/>
            <person name="Metenier G."/>
            <person name="Thomarat F."/>
            <person name="Prensier G."/>
            <person name="Barbe V."/>
            <person name="Peyretaillade E."/>
            <person name="Brottier P."/>
            <person name="Wincker P."/>
            <person name="Delbac F."/>
            <person name="El Alaoui H."/>
            <person name="Peyret P."/>
            <person name="Saurin W."/>
            <person name="Gouy M."/>
            <person name="Weissenbach J."/>
            <person name="Vivares C.P."/>
        </authorList>
    </citation>
    <scope>NUCLEOTIDE SEQUENCE [LARGE SCALE GENOMIC DNA]</scope>
    <source>
        <strain>GB-M1</strain>
    </source>
</reference>
<proteinExistence type="inferred from homology"/>
<sequence length="268" mass="30530">MNTFSPQQHTENRLRWSPALKGLPPLVSIAFPALIYLIFGKDRFEENPFLKFITLLLPLSYSAAHHLFLVHTSWNRSNKPEGILHSISYYTLNLLLLTFATISILSIIAFPFDEWEGDDSYYCSIILPSFFMPSVYLLSTSCCLVPGRIGFTDTGINVPIGMSILLCPAVSFVLVCKESEYHLLPAILFPILILIRLFKEKCFPSEKNALPTAPWRTAIFVFILILSIFIYTLMARVFVISLYDYLSRTVFYSNTAPVLRPDRILSLL</sequence>
<comment type="similarity">
    <text evidence="1">Belongs to the UPF0328 family.</text>
</comment>
<evidence type="ECO:0000305" key="1"/>
<organism>
    <name type="scientific">Encephalitozoon cuniculi (strain GB-M1)</name>
    <name type="common">Microsporidian parasite</name>
    <dbReference type="NCBI Taxonomy" id="284813"/>
    <lineage>
        <taxon>Eukaryota</taxon>
        <taxon>Fungi</taxon>
        <taxon>Fungi incertae sedis</taxon>
        <taxon>Microsporidia</taxon>
        <taxon>Unikaryonidae</taxon>
        <taxon>Encephalitozoon</taxon>
    </lineage>
</organism>
<name>Y5G4_ENCCU</name>
<keyword id="KW-1185">Reference proteome</keyword>
<feature type="chain" id="PRO_0000223126" description="UPF0328 protein ECU05_1640/ECU11_0090">
    <location>
        <begin position="1"/>
        <end position="268"/>
    </location>
</feature>